<accession>Q04GA2</accession>
<sequence>MYDFLTGIIKTIAAGYVGIDVNGIGFRVFTPNPYEYNQNDQTTIFTEQIVRDNQISLYGFKTVKERNLFQKLLNVSGIGPKSALAIIAGGDRDGLIAAVENGKPKYLTKFPGIGNKTAQQIVLDLKGKLGDFSKNIAPMKNLLENSAELDDALAALVALGFSSKEVNKINPKLASLGELTTDAYIQKGLKLLTK</sequence>
<organism>
    <name type="scientific">Oenococcus oeni (strain ATCC BAA-331 / PSU-1)</name>
    <dbReference type="NCBI Taxonomy" id="203123"/>
    <lineage>
        <taxon>Bacteria</taxon>
        <taxon>Bacillati</taxon>
        <taxon>Bacillota</taxon>
        <taxon>Bacilli</taxon>
        <taxon>Lactobacillales</taxon>
        <taxon>Lactobacillaceae</taxon>
        <taxon>Oenococcus</taxon>
    </lineage>
</organism>
<dbReference type="EMBL" id="CP000411">
    <property type="protein sequence ID" value="ABJ56520.1"/>
    <property type="molecule type" value="Genomic_DNA"/>
</dbReference>
<dbReference type="RefSeq" id="WP_011677520.1">
    <property type="nucleotide sequence ID" value="NC_008528.1"/>
</dbReference>
<dbReference type="SMR" id="Q04GA2"/>
<dbReference type="STRING" id="203123.OEOE_0577"/>
<dbReference type="GeneID" id="75065399"/>
<dbReference type="KEGG" id="ooe:OEOE_0577"/>
<dbReference type="PATRIC" id="fig|203123.7.peg.586"/>
<dbReference type="eggNOG" id="COG0632">
    <property type="taxonomic scope" value="Bacteria"/>
</dbReference>
<dbReference type="HOGENOM" id="CLU_087936_1_0_9"/>
<dbReference type="Proteomes" id="UP000000774">
    <property type="component" value="Chromosome"/>
</dbReference>
<dbReference type="GO" id="GO:0005737">
    <property type="term" value="C:cytoplasm"/>
    <property type="evidence" value="ECO:0007669"/>
    <property type="project" value="UniProtKB-SubCell"/>
</dbReference>
<dbReference type="GO" id="GO:0009379">
    <property type="term" value="C:Holliday junction helicase complex"/>
    <property type="evidence" value="ECO:0007669"/>
    <property type="project" value="InterPro"/>
</dbReference>
<dbReference type="GO" id="GO:0048476">
    <property type="term" value="C:Holliday junction resolvase complex"/>
    <property type="evidence" value="ECO:0007669"/>
    <property type="project" value="UniProtKB-UniRule"/>
</dbReference>
<dbReference type="GO" id="GO:0005524">
    <property type="term" value="F:ATP binding"/>
    <property type="evidence" value="ECO:0007669"/>
    <property type="project" value="InterPro"/>
</dbReference>
<dbReference type="GO" id="GO:0000400">
    <property type="term" value="F:four-way junction DNA binding"/>
    <property type="evidence" value="ECO:0007669"/>
    <property type="project" value="UniProtKB-UniRule"/>
</dbReference>
<dbReference type="GO" id="GO:0009378">
    <property type="term" value="F:four-way junction helicase activity"/>
    <property type="evidence" value="ECO:0007669"/>
    <property type="project" value="InterPro"/>
</dbReference>
<dbReference type="GO" id="GO:0006310">
    <property type="term" value="P:DNA recombination"/>
    <property type="evidence" value="ECO:0007669"/>
    <property type="project" value="UniProtKB-UniRule"/>
</dbReference>
<dbReference type="GO" id="GO:0006281">
    <property type="term" value="P:DNA repair"/>
    <property type="evidence" value="ECO:0007669"/>
    <property type="project" value="UniProtKB-UniRule"/>
</dbReference>
<dbReference type="CDD" id="cd14332">
    <property type="entry name" value="UBA_RuvA_C"/>
    <property type="match status" value="1"/>
</dbReference>
<dbReference type="Gene3D" id="1.10.150.20">
    <property type="entry name" value="5' to 3' exonuclease, C-terminal subdomain"/>
    <property type="match status" value="1"/>
</dbReference>
<dbReference type="Gene3D" id="1.10.8.10">
    <property type="entry name" value="DNA helicase RuvA subunit, C-terminal domain"/>
    <property type="match status" value="1"/>
</dbReference>
<dbReference type="Gene3D" id="2.40.50.140">
    <property type="entry name" value="Nucleic acid-binding proteins"/>
    <property type="match status" value="1"/>
</dbReference>
<dbReference type="HAMAP" id="MF_00031">
    <property type="entry name" value="DNA_HJ_migration_RuvA"/>
    <property type="match status" value="1"/>
</dbReference>
<dbReference type="InterPro" id="IPR013849">
    <property type="entry name" value="DNA_helicase_Holl-junc_RuvA_I"/>
</dbReference>
<dbReference type="InterPro" id="IPR003583">
    <property type="entry name" value="Hlx-hairpin-Hlx_DNA-bd_motif"/>
</dbReference>
<dbReference type="InterPro" id="IPR012340">
    <property type="entry name" value="NA-bd_OB-fold"/>
</dbReference>
<dbReference type="InterPro" id="IPR000085">
    <property type="entry name" value="RuvA"/>
</dbReference>
<dbReference type="InterPro" id="IPR010994">
    <property type="entry name" value="RuvA_2-like"/>
</dbReference>
<dbReference type="InterPro" id="IPR011114">
    <property type="entry name" value="RuvA_C"/>
</dbReference>
<dbReference type="InterPro" id="IPR036267">
    <property type="entry name" value="RuvA_C_sf"/>
</dbReference>
<dbReference type="NCBIfam" id="TIGR00084">
    <property type="entry name" value="ruvA"/>
    <property type="match status" value="1"/>
</dbReference>
<dbReference type="Pfam" id="PF14520">
    <property type="entry name" value="HHH_5"/>
    <property type="match status" value="1"/>
</dbReference>
<dbReference type="Pfam" id="PF07499">
    <property type="entry name" value="RuvA_C"/>
    <property type="match status" value="1"/>
</dbReference>
<dbReference type="Pfam" id="PF01330">
    <property type="entry name" value="RuvA_N"/>
    <property type="match status" value="1"/>
</dbReference>
<dbReference type="SMART" id="SM00278">
    <property type="entry name" value="HhH1"/>
    <property type="match status" value="2"/>
</dbReference>
<dbReference type="SUPFAM" id="SSF46929">
    <property type="entry name" value="DNA helicase RuvA subunit, C-terminal domain"/>
    <property type="match status" value="1"/>
</dbReference>
<dbReference type="SUPFAM" id="SSF50249">
    <property type="entry name" value="Nucleic acid-binding proteins"/>
    <property type="match status" value="1"/>
</dbReference>
<dbReference type="SUPFAM" id="SSF47781">
    <property type="entry name" value="RuvA domain 2-like"/>
    <property type="match status" value="1"/>
</dbReference>
<keyword id="KW-0963">Cytoplasm</keyword>
<keyword id="KW-0227">DNA damage</keyword>
<keyword id="KW-0233">DNA recombination</keyword>
<keyword id="KW-0234">DNA repair</keyword>
<keyword id="KW-0238">DNA-binding</keyword>
<keyword id="KW-1185">Reference proteome</keyword>
<protein>
    <recommendedName>
        <fullName evidence="1">Holliday junction branch migration complex subunit RuvA</fullName>
    </recommendedName>
</protein>
<gene>
    <name evidence="1" type="primary">ruvA</name>
    <name type="ordered locus">OEOE_0577</name>
</gene>
<feature type="chain" id="PRO_1000002504" description="Holliday junction branch migration complex subunit RuvA">
    <location>
        <begin position="1"/>
        <end position="194"/>
    </location>
</feature>
<feature type="region of interest" description="Domain I" evidence="1">
    <location>
        <begin position="1"/>
        <end position="61"/>
    </location>
</feature>
<feature type="region of interest" description="Domain II" evidence="1">
    <location>
        <begin position="62"/>
        <end position="139"/>
    </location>
</feature>
<feature type="region of interest" description="Flexible linker" evidence="1">
    <location>
        <begin position="139"/>
        <end position="143"/>
    </location>
</feature>
<feature type="region of interest" description="Domain III" evidence="1">
    <location>
        <begin position="144"/>
        <end position="194"/>
    </location>
</feature>
<reference key="1">
    <citation type="journal article" date="2006" name="Proc. Natl. Acad. Sci. U.S.A.">
        <title>Comparative genomics of the lactic acid bacteria.</title>
        <authorList>
            <person name="Makarova K.S."/>
            <person name="Slesarev A."/>
            <person name="Wolf Y.I."/>
            <person name="Sorokin A."/>
            <person name="Mirkin B."/>
            <person name="Koonin E.V."/>
            <person name="Pavlov A."/>
            <person name="Pavlova N."/>
            <person name="Karamychev V."/>
            <person name="Polouchine N."/>
            <person name="Shakhova V."/>
            <person name="Grigoriev I."/>
            <person name="Lou Y."/>
            <person name="Rohksar D."/>
            <person name="Lucas S."/>
            <person name="Huang K."/>
            <person name="Goodstein D.M."/>
            <person name="Hawkins T."/>
            <person name="Plengvidhya V."/>
            <person name="Welker D."/>
            <person name="Hughes J."/>
            <person name="Goh Y."/>
            <person name="Benson A."/>
            <person name="Baldwin K."/>
            <person name="Lee J.-H."/>
            <person name="Diaz-Muniz I."/>
            <person name="Dosti B."/>
            <person name="Smeianov V."/>
            <person name="Wechter W."/>
            <person name="Barabote R."/>
            <person name="Lorca G."/>
            <person name="Altermann E."/>
            <person name="Barrangou R."/>
            <person name="Ganesan B."/>
            <person name="Xie Y."/>
            <person name="Rawsthorne H."/>
            <person name="Tamir D."/>
            <person name="Parker C."/>
            <person name="Breidt F."/>
            <person name="Broadbent J.R."/>
            <person name="Hutkins R."/>
            <person name="O'Sullivan D."/>
            <person name="Steele J."/>
            <person name="Unlu G."/>
            <person name="Saier M.H. Jr."/>
            <person name="Klaenhammer T."/>
            <person name="Richardson P."/>
            <person name="Kozyavkin S."/>
            <person name="Weimer B.C."/>
            <person name="Mills D.A."/>
        </authorList>
    </citation>
    <scope>NUCLEOTIDE SEQUENCE [LARGE SCALE GENOMIC DNA]</scope>
    <source>
        <strain>ATCC BAA-331 / PSU-1</strain>
    </source>
</reference>
<evidence type="ECO:0000255" key="1">
    <source>
        <dbReference type="HAMAP-Rule" id="MF_00031"/>
    </source>
</evidence>
<name>RUVA_OENOB</name>
<comment type="function">
    <text evidence="1">The RuvA-RuvB-RuvC complex processes Holliday junction (HJ) DNA during genetic recombination and DNA repair, while the RuvA-RuvB complex plays an important role in the rescue of blocked DNA replication forks via replication fork reversal (RFR). RuvA specifically binds to HJ cruciform DNA, conferring on it an open structure. The RuvB hexamer acts as an ATP-dependent pump, pulling dsDNA into and through the RuvAB complex. HJ branch migration allows RuvC to scan DNA until it finds its consensus sequence, where it cleaves and resolves the cruciform DNA.</text>
</comment>
<comment type="subunit">
    <text evidence="1">Homotetramer. Forms an RuvA(8)-RuvB(12)-Holliday junction (HJ) complex. HJ DNA is sandwiched between 2 RuvA tetramers; dsDNA enters through RuvA and exits via RuvB. An RuvB hexamer assembles on each DNA strand where it exits the tetramer. Each RuvB hexamer is contacted by two RuvA subunits (via domain III) on 2 adjacent RuvB subunits; this complex drives branch migration. In the full resolvosome a probable DNA-RuvA(4)-RuvB(12)-RuvC(2) complex forms which resolves the HJ.</text>
</comment>
<comment type="subcellular location">
    <subcellularLocation>
        <location evidence="1">Cytoplasm</location>
    </subcellularLocation>
</comment>
<comment type="domain">
    <text evidence="1">Has three domains with a flexible linker between the domains II and III and assumes an 'L' shape. Domain III is highly mobile and contacts RuvB.</text>
</comment>
<comment type="similarity">
    <text evidence="1">Belongs to the RuvA family.</text>
</comment>
<proteinExistence type="inferred from homology"/>